<comment type="function">
    <text evidence="5 6 8 9 10 11 12 14">Accepts ubiquitin from the E1 complex and catalyzes its covalent attachment to other proteins. In vitro, in the presence or in the absence of BRCA1-BARD1 E3 ubiquitin-protein ligase complex, catalyzes the synthesis of 'Lys-48'-linked polyubiquitin chains. Does not transfer ubiquitin directly to but elongates monoubiquitinated substrate protein. Mediates the selective degradation of short-lived and abnormal proteins, such as the endoplasmic reticulum-associated degradation (ERAD) of misfolded lumenal proteins. Ubiquitinates huntingtin. May mediate foam cell formation by the suppression of apoptosis of lipid-bearing macrophages through ubiquitination and subsequence degradation of p53/TP53. Proposed to be involved in ubiquitination and proteolytic processing of NF-kappa-B; in vitro supports ubiquitination of NFKB1. In case of infection by cytomegaloviruses may be involved in the US11-dependent degradation of MHC class I heavy chains following their export from the ER to the cytosol. In case of viral infections may be involved in the HPV E7 protein-dependent degradation of RB1.</text>
</comment>
<comment type="catalytic activity">
    <reaction evidence="3 4 12">
        <text>S-ubiquitinyl-[E1 ubiquitin-activating enzyme]-L-cysteine + [E2 ubiquitin-conjugating enzyme]-L-cysteine = [E1 ubiquitin-activating enzyme]-L-cysteine + S-ubiquitinyl-[E2 ubiquitin-conjugating enzyme]-L-cysteine.</text>
        <dbReference type="EC" id="2.3.2.23"/>
    </reaction>
</comment>
<comment type="pathway">
    <text evidence="3">Protein modification; protein ubiquitination.</text>
</comment>
<comment type="subunit">
    <text evidence="8 10 16">Interacts with RNF138/NARF. Interacts with BRCA1.</text>
</comment>
<comment type="interaction">
    <interactant intactId="EBI-473850">
        <id>P61086</id>
    </interactant>
    <interactant intactId="EBI-18899653">
        <id>Q6DHV7-2</id>
        <label>ADAL</label>
    </interactant>
    <organismsDiffer>false</organismsDiffer>
    <experiments>3</experiments>
</comment>
<comment type="interaction">
    <interactant intactId="EBI-473850">
        <id>P61086</id>
    </interactant>
    <interactant intactId="EBI-2130199">
        <id>Q9NZS9</id>
        <label>BFAR</label>
    </interactant>
    <organismsDiffer>false</organismsDiffer>
    <experiments>6</experiments>
</comment>
<comment type="interaction">
    <interactant intactId="EBI-473850">
        <id>P61086</id>
    </interactant>
    <interactant intactId="EBI-517623">
        <id>Q96CA5</id>
        <label>BIRC7</label>
    </interactant>
    <organismsDiffer>false</organismsDiffer>
    <experiments>3</experiments>
</comment>
<comment type="interaction">
    <interactant intactId="EBI-473850">
        <id>P61086</id>
    </interactant>
    <interactant intactId="EBI-2129837">
        <id>Q6PIA0</id>
        <label>BIRC8</label>
    </interactant>
    <organismsDiffer>false</organismsDiffer>
    <experiments>3</experiments>
</comment>
<comment type="interaction">
    <interactant intactId="EBI-473850">
        <id>P61086</id>
    </interactant>
    <interactant intactId="EBI-2837444">
        <id>Q8WUW1</id>
        <label>BRK1</label>
    </interactant>
    <organismsDiffer>false</organismsDiffer>
    <experiments>3</experiments>
</comment>
<comment type="interaction">
    <interactant intactId="EBI-473850">
        <id>P61086</id>
    </interactant>
    <interactant intactId="EBI-1383687">
        <id>Q9UQM7</id>
        <label>CAMK2A</label>
    </interactant>
    <organismsDiffer>false</organismsDiffer>
    <experiments>3</experiments>
</comment>
<comment type="interaction">
    <interactant intactId="EBI-473850">
        <id>P61086</id>
    </interactant>
    <interactant intactId="EBI-2341018">
        <id>Q9ULV8</id>
        <label>CBLC</label>
    </interactant>
    <organismsDiffer>false</organismsDiffer>
    <experiments>3</experiments>
</comment>
<comment type="interaction">
    <interactant intactId="EBI-473850">
        <id>P61086</id>
    </interactant>
    <interactant intactId="EBI-495332">
        <id>P14635</id>
        <label>CCNB1</label>
    </interactant>
    <organismsDiffer>false</organismsDiffer>
    <experiments>2</experiments>
</comment>
<comment type="interaction">
    <interactant intactId="EBI-473850">
        <id>P61086</id>
    </interactant>
    <interactant intactId="EBI-395261">
        <id>P24863</id>
        <label>CCNC</label>
    </interactant>
    <organismsDiffer>false</organismsDiffer>
    <experiments>3</experiments>
</comment>
<comment type="interaction">
    <interactant intactId="EBI-473850">
        <id>P61086</id>
    </interactant>
    <interactant intactId="EBI-744045">
        <id>Q9Y3D0</id>
        <label>CIAO2B</label>
    </interactant>
    <organismsDiffer>false</organismsDiffer>
    <experiments>3</experiments>
</comment>
<comment type="interaction">
    <interactant intactId="EBI-473850">
        <id>P61086</id>
    </interactant>
    <interactant intactId="EBI-748248">
        <id>Q8WTU0</id>
        <label>DDI1</label>
    </interactant>
    <organismsDiffer>false</organismsDiffer>
    <experiments>3</experiments>
</comment>
<comment type="interaction">
    <interactant intactId="EBI-473850">
        <id>P61086</id>
    </interactant>
    <interactant intactId="EBI-715104">
        <id>Q9NX09</id>
        <label>DDIT4</label>
    </interactant>
    <organismsDiffer>false</organismsDiffer>
    <experiments>3</experiments>
</comment>
<comment type="interaction">
    <interactant intactId="EBI-473850">
        <id>P61086</id>
    </interactant>
    <interactant intactId="EBI-2340258">
        <id>Q8N9I9</id>
        <label>DTX3</label>
    </interactant>
    <organismsDiffer>false</organismsDiffer>
    <experiments>10</experiments>
</comment>
<comment type="interaction">
    <interactant intactId="EBI-473850">
        <id>P61086</id>
    </interactant>
    <interactant intactId="EBI-2340392">
        <id>Q8TDB6</id>
        <label>DTX3L</label>
    </interactant>
    <organismsDiffer>false</organismsDiffer>
    <experiments>3</experiments>
</comment>
<comment type="interaction">
    <interactant intactId="EBI-473850">
        <id>P61086</id>
    </interactant>
    <interactant intactId="EBI-372173">
        <id>O77932</id>
        <label>DXO</label>
    </interactant>
    <organismsDiffer>false</organismsDiffer>
    <experiments>3</experiments>
</comment>
<comment type="interaction">
    <interactant intactId="EBI-473850">
        <id>P61086</id>
    </interactant>
    <interactant intactId="EBI-371841">
        <id>Q15024</id>
        <label>EXOSC7</label>
    </interactant>
    <organismsDiffer>false</organismsDiffer>
    <experiments>3</experiments>
</comment>
<comment type="interaction">
    <interactant intactId="EBI-473850">
        <id>P61086</id>
    </interactant>
    <interactant intactId="EBI-11793142">
        <id>Q96GL9</id>
        <label>FAM163A</label>
    </interactant>
    <organismsDiffer>false</organismsDiffer>
    <experiments>3</experiments>
</comment>
<comment type="interaction">
    <interactant intactId="EBI-473850">
        <id>P61086</id>
    </interactant>
    <interactant intactId="EBI-747570">
        <id>Q7L8L6</id>
        <label>FASTKD5</label>
    </interactant>
    <organismsDiffer>false</organismsDiffer>
    <experiments>3</experiments>
</comment>
<comment type="interaction">
    <interactant intactId="EBI-473850">
        <id>P61086</id>
    </interactant>
    <interactant intactId="EBI-20835942">
        <id>Q4G1C9-2</id>
        <label>GLIPR1L2</label>
    </interactant>
    <organismsDiffer>false</organismsDiffer>
    <experiments>3</experiments>
</comment>
<comment type="interaction">
    <interactant intactId="EBI-473850">
        <id>P61086</id>
    </interactant>
    <interactant intactId="EBI-356942">
        <id>P62879</id>
        <label>GNB2</label>
    </interactant>
    <organismsDiffer>false</organismsDiffer>
    <experiments>3</experiments>
</comment>
<comment type="interaction">
    <interactant intactId="EBI-473850">
        <id>P61086</id>
    </interactant>
    <interactant intactId="EBI-3957665">
        <id>Q96LI6</id>
        <label>HSFY2</label>
    </interactant>
    <organismsDiffer>false</organismsDiffer>
    <experiments>3</experiments>
</comment>
<comment type="interaction">
    <interactant intactId="EBI-473850">
        <id>P61086</id>
    </interactant>
    <interactant intactId="EBI-466029">
        <id>P42858</id>
        <label>HTT</label>
    </interactant>
    <organismsDiffer>false</organismsDiffer>
    <experiments>24</experiments>
</comment>
<comment type="interaction">
    <interactant intactId="EBI-473850">
        <id>P61086</id>
    </interactant>
    <interactant intactId="EBI-1573121">
        <id>O00522</id>
        <label>KRIT1</label>
    </interactant>
    <organismsDiffer>false</organismsDiffer>
    <experiments>3</experiments>
</comment>
<comment type="interaction">
    <interactant intactId="EBI-473850">
        <id>P61086</id>
    </interactant>
    <interactant intactId="EBI-715385">
        <id>Q6IAA8</id>
        <label>LAMTOR1</label>
    </interactant>
    <organismsDiffer>false</organismsDiffer>
    <experiments>3</experiments>
</comment>
<comment type="interaction">
    <interactant intactId="EBI-473850">
        <id>P61086</id>
    </interactant>
    <interactant intactId="EBI-2341065">
        <id>Q86UD3</id>
        <label>MARCHF3</label>
    </interactant>
    <organismsDiffer>false</organismsDiffer>
    <experiments>3</experiments>
</comment>
<comment type="interaction">
    <interactant intactId="EBI-473850">
        <id>P61086</id>
    </interactant>
    <interactant intactId="EBI-949983">
        <id>Q9H992</id>
        <label>MARCHF7</label>
    </interactant>
    <organismsDiffer>false</organismsDiffer>
    <experiments>3</experiments>
</comment>
<comment type="interaction">
    <interactant intactId="EBI-473850">
        <id>P61086</id>
    </interactant>
    <interactant intactId="EBI-16439278">
        <id>Q6FHY5</id>
        <label>MEOX2</label>
    </interactant>
    <organismsDiffer>false</organismsDiffer>
    <experiments>3</experiments>
</comment>
<comment type="interaction">
    <interactant intactId="EBI-473850">
        <id>P61086</id>
    </interactant>
    <interactant intactId="EBI-2340316">
        <id>O15344</id>
        <label>MID1</label>
    </interactant>
    <organismsDiffer>false</organismsDiffer>
    <experiments>3</experiments>
</comment>
<comment type="interaction">
    <interactant intactId="EBI-473850">
        <id>P61086</id>
    </interactant>
    <interactant intactId="EBI-10172526">
        <id>Q9UJV3-2</id>
        <label>MID2</label>
    </interactant>
    <organismsDiffer>false</organismsDiffer>
    <experiments>3</experiments>
</comment>
<comment type="interaction">
    <interactant intactId="EBI-473850">
        <id>P61086</id>
    </interactant>
    <interactant intactId="EBI-2548751">
        <id>Q8TD10</id>
        <label>MIPOL1</label>
    </interactant>
    <organismsDiffer>false</organismsDiffer>
    <experiments>6</experiments>
</comment>
<comment type="interaction">
    <interactant intactId="EBI-473850">
        <id>P61086</id>
    </interactant>
    <interactant intactId="EBI-2340269">
        <id>Q13064</id>
        <label>MKRN3</label>
    </interactant>
    <organismsDiffer>false</organismsDiffer>
    <experiments>3</experiments>
</comment>
<comment type="interaction">
    <interactant intactId="EBI-473850">
        <id>P61086</id>
    </interactant>
    <interactant intactId="EBI-716247">
        <id>Q15843</id>
        <label>NEDD8</label>
    </interactant>
    <organismsDiffer>false</organismsDiffer>
    <experiments>3</experiments>
</comment>
<comment type="interaction">
    <interactant intactId="EBI-473850">
        <id>P61086</id>
    </interactant>
    <interactant intactId="EBI-747278">
        <id>P26367</id>
        <label>PAX6</label>
    </interactant>
    <organismsDiffer>false</organismsDiffer>
    <experiments>3</experiments>
</comment>
<comment type="interaction">
    <interactant intactId="EBI-473850">
        <id>P61086</id>
    </interactant>
    <interactant intactId="EBI-79165">
        <id>Q9NRD5</id>
        <label>PICK1</label>
    </interactant>
    <organismsDiffer>false</organismsDiffer>
    <experiments>3</experiments>
</comment>
<comment type="interaction">
    <interactant intactId="EBI-473850">
        <id>P61086</id>
    </interactant>
    <interactant intactId="EBI-743880">
        <id>Q8WUY3</id>
        <label>PRUNE2</label>
    </interactant>
    <organismsDiffer>false</organismsDiffer>
    <experiments>3</experiments>
</comment>
<comment type="interaction">
    <interactant intactId="EBI-473850">
        <id>P61086</id>
    </interactant>
    <interactant intactId="EBI-2340624">
        <id>Q9BYM8</id>
        <label>RBCK1</label>
    </interactant>
    <organismsDiffer>false</organismsDiffer>
    <experiments>3</experiments>
</comment>
<comment type="interaction">
    <interactant intactId="EBI-473850">
        <id>P61086</id>
    </interactant>
    <interactant intactId="EBI-25867896">
        <id>Q9BYM8-4</id>
        <label>RBCK1</label>
    </interactant>
    <organismsDiffer>false</organismsDiffer>
    <experiments>3</experiments>
</comment>
<comment type="interaction">
    <interactant intactId="EBI-473850">
        <id>P61086</id>
    </interactant>
    <interactant intactId="EBI-307352">
        <id>Q04864</id>
        <label>REL</label>
    </interactant>
    <organismsDiffer>false</organismsDiffer>
    <experiments>3</experiments>
</comment>
<comment type="interaction">
    <interactant intactId="EBI-473850">
        <id>P61086</id>
    </interactant>
    <interactant intactId="EBI-752313">
        <id>Q06587</id>
        <label>RING1</label>
    </interactant>
    <organismsDiffer>false</organismsDiffer>
    <experiments>9</experiments>
</comment>
<comment type="interaction">
    <interactant intactId="EBI-473850">
        <id>P61086</id>
    </interactant>
    <interactant intactId="EBI-21535400">
        <id>Q6ZNA4-2</id>
        <label>RNF111</label>
    </interactant>
    <organismsDiffer>false</organismsDiffer>
    <experiments>3</experiments>
</comment>
<comment type="interaction">
    <interactant intactId="EBI-473850">
        <id>P61086</id>
    </interactant>
    <interactant intactId="EBI-723587">
        <id>Q9Y508</id>
        <label>RNF114</label>
    </interactant>
    <organismsDiffer>false</organismsDiffer>
    <experiments>3</experiments>
</comment>
<comment type="interaction">
    <interactant intactId="EBI-473850">
        <id>P61086</id>
    </interactant>
    <interactant intactId="EBI-749039">
        <id>Q8WVD3</id>
        <label>RNF138</label>
    </interactant>
    <organismsDiffer>false</organismsDiffer>
    <experiments>12</experiments>
</comment>
<comment type="interaction">
    <interactant intactId="EBI-473850">
        <id>P61086</id>
    </interactant>
    <interactant intactId="EBI-2130320">
        <id>Q96A37</id>
        <label>RNF166</label>
    </interactant>
    <organismsDiffer>false</organismsDiffer>
    <experiments>3</experiments>
</comment>
<comment type="interaction">
    <interactant intactId="EBI-473850">
        <id>P61086</id>
    </interactant>
    <interactant intactId="EBI-1055214">
        <id>Q9H6Y7</id>
        <label>RNF167</label>
    </interactant>
    <organismsDiffer>false</organismsDiffer>
    <experiments>3</experiments>
</comment>
<comment type="interaction">
    <interactant intactId="EBI-473850">
        <id>P61086</id>
    </interactant>
    <interactant intactId="EBI-2130099">
        <id>Q8N6D2</id>
        <label>RNF182</label>
    </interactant>
    <organismsDiffer>false</organismsDiffer>
    <experiments>3</experiments>
</comment>
<comment type="interaction">
    <interactant intactId="EBI-473850">
        <id>P61086</id>
    </interactant>
    <interactant intactId="EBI-743938">
        <id>Q96D59</id>
        <label>RNF183</label>
    </interactant>
    <organismsDiffer>false</organismsDiffer>
    <experiments>3</experiments>
</comment>
<comment type="interaction">
    <interactant intactId="EBI-473850">
        <id>P61086</id>
    </interactant>
    <interactant intactId="EBI-2340249">
        <id>Q96GF1</id>
        <label>RNF185</label>
    </interactant>
    <organismsDiffer>false</organismsDiffer>
    <experiments>3</experiments>
</comment>
<comment type="interaction">
    <interactant intactId="EBI-473850">
        <id>P61086</id>
    </interactant>
    <interactant intactId="EBI-722416">
        <id>Q99496</id>
        <label>RNF2</label>
    </interactant>
    <organismsDiffer>false</organismsDiffer>
    <experiments>3</experiments>
</comment>
<comment type="interaction">
    <interactant intactId="EBI-473850">
        <id>P61086</id>
    </interactant>
    <interactant intactId="EBI-25868153">
        <id>Q9H0A6-4</id>
        <label>RNF32</label>
    </interactant>
    <organismsDiffer>false</organismsDiffer>
    <experiments>3</experiments>
</comment>
<comment type="interaction">
    <interactant intactId="EBI-473850">
        <id>P61086</id>
    </interactant>
    <interactant intactId="EBI-2130266">
        <id>Q9H4P4</id>
        <label>RNF41</label>
    </interactant>
    <organismsDiffer>false</organismsDiffer>
    <experiments>3</experiments>
</comment>
<comment type="interaction">
    <interactant intactId="EBI-473850">
        <id>P61086</id>
    </interactant>
    <interactant intactId="EBI-348482">
        <id>Q99942</id>
        <label>RNF5</label>
    </interactant>
    <organismsDiffer>false</organismsDiffer>
    <experiments>11</experiments>
</comment>
<comment type="interaction">
    <interactant intactId="EBI-473850">
        <id>P61086</id>
    </interactant>
    <interactant intactId="EBI-727004">
        <id>O00560</id>
        <label>SDCBP</label>
    </interactant>
    <organismsDiffer>false</organismsDiffer>
    <experiments>3</experiments>
</comment>
<comment type="interaction">
    <interactant intactId="EBI-473850">
        <id>P61086</id>
    </interactant>
    <interactant intactId="EBI-747107">
        <id>Q8IUQ4</id>
        <label>SIAH1</label>
    </interactant>
    <organismsDiffer>false</organismsDiffer>
    <experiments>4</experiments>
</comment>
<comment type="interaction">
    <interactant intactId="EBI-473850">
        <id>P61086</id>
    </interactant>
    <interactant intactId="EBI-11522811">
        <id>Q8IUQ4-2</id>
        <label>SIAH1</label>
    </interactant>
    <organismsDiffer>false</organismsDiffer>
    <experiments>6</experiments>
</comment>
<comment type="interaction">
    <interactant intactId="EBI-473850">
        <id>P61086</id>
    </interactant>
    <interactant intactId="EBI-2659201">
        <id>Q96BD6</id>
        <label>SPSB1</label>
    </interactant>
    <organismsDiffer>false</organismsDiffer>
    <experiments>3</experiments>
</comment>
<comment type="interaction">
    <interactant intactId="EBI-473850">
        <id>P61086</id>
    </interactant>
    <interactant intactId="EBI-2323209">
        <id>Q99619</id>
        <label>SPSB2</label>
    </interactant>
    <organismsDiffer>false</organismsDiffer>
    <experiments>3</experiments>
</comment>
<comment type="interaction">
    <interactant intactId="EBI-473850">
        <id>P61086</id>
    </interactant>
    <interactant intactId="EBI-11123832">
        <id>O60506-4</id>
        <label>SYNCRIP</label>
    </interactant>
    <organismsDiffer>false</organismsDiffer>
    <experiments>3</experiments>
</comment>
<comment type="interaction">
    <interactant intactId="EBI-473850">
        <id>P61086</id>
    </interactant>
    <interactant intactId="EBI-954089">
        <id>O15273</id>
        <label>TCAP</label>
    </interactant>
    <organismsDiffer>false</organismsDiffer>
    <experiments>3</experiments>
</comment>
<comment type="interaction">
    <interactant intactId="EBI-473850">
        <id>P61086</id>
    </interactant>
    <interactant intactId="EBI-396540">
        <id>Q12888</id>
        <label>TP53BP1</label>
    </interactant>
    <organismsDiffer>false</organismsDiffer>
    <experiments>3</experiments>
</comment>
<comment type="interaction">
    <interactant intactId="EBI-473850">
        <id>P61086</id>
    </interactant>
    <interactant intactId="EBI-1756205">
        <id>Q9BWF2</id>
        <label>TRAIP</label>
    </interactant>
    <organismsDiffer>false</organismsDiffer>
    <experiments>3</experiments>
</comment>
<comment type="interaction">
    <interactant intactId="EBI-473850">
        <id>P61086</id>
    </interactant>
    <interactant intactId="EBI-749840">
        <id>Q9C040</id>
        <label>TRIM2</label>
    </interactant>
    <organismsDiffer>false</organismsDiffer>
    <experiments>3</experiments>
</comment>
<comment type="interaction">
    <interactant intactId="EBI-473850">
        <id>P61086</id>
    </interactant>
    <interactant intactId="EBI-719493">
        <id>P14373</id>
        <label>TRIM27</label>
    </interactant>
    <organismsDiffer>false</organismsDiffer>
    <experiments>12</experiments>
</comment>
<comment type="interaction">
    <interactant intactId="EBI-473850">
        <id>P61086</id>
    </interactant>
    <interactant intactId="EBI-747544">
        <id>Q9BZY9</id>
        <label>TRIM31</label>
    </interactant>
    <organismsDiffer>false</organismsDiffer>
    <experiments>11</experiments>
</comment>
<comment type="interaction">
    <interactant intactId="EBI-473850">
        <id>P61086</id>
    </interactant>
    <interactant intactId="EBI-17716262">
        <id>Q9UPQ4-2</id>
        <label>TRIM35</label>
    </interactant>
    <organismsDiffer>false</organismsDiffer>
    <experiments>6</experiments>
</comment>
<comment type="interaction">
    <interactant intactId="EBI-473850">
        <id>P61086</id>
    </interactant>
    <interactant intactId="EBI-739510">
        <id>Q9HCM9</id>
        <label>TRIM39</label>
    </interactant>
    <organismsDiffer>false</organismsDiffer>
    <experiments>3</experiments>
</comment>
<comment type="interaction">
    <interactant intactId="EBI-473850">
        <id>P61086</id>
    </interactant>
    <interactant intactId="EBI-11523450">
        <id>Q9HCM9-2</id>
        <label>TRIM39</label>
    </interactant>
    <organismsDiffer>false</organismsDiffer>
    <experiments>8</experiments>
</comment>
<comment type="interaction">
    <interactant intactId="EBI-473850">
        <id>P61086</id>
    </interactant>
    <interactant intactId="EBI-2129899">
        <id>Q96BQ3</id>
        <label>TRIM43</label>
    </interactant>
    <organismsDiffer>false</organismsDiffer>
    <experiments>3</experiments>
</comment>
<comment type="interaction">
    <interactant intactId="EBI-473850">
        <id>P61086</id>
    </interactant>
    <interactant intactId="EBI-12840050">
        <id>Q9C035-3</id>
        <label>TRIM5</label>
    </interactant>
    <organismsDiffer>false</organismsDiffer>
    <experiments>6</experiments>
</comment>
<comment type="interaction">
    <interactant intactId="EBI-473850">
        <id>P61086</id>
    </interactant>
    <interactant intactId="EBI-9867283">
        <id>Q86XT4</id>
        <label>TRIM50</label>
    </interactant>
    <organismsDiffer>false</organismsDiffer>
    <experiments>3</experiments>
</comment>
<comment type="interaction">
    <interactant intactId="EBI-473850">
        <id>P61086</id>
    </interactant>
    <interactant intactId="EBI-1044160">
        <id>Q15631</id>
        <label>TSN</label>
    </interactant>
    <organismsDiffer>false</organismsDiffer>
    <experiments>3</experiments>
</comment>
<comment type="interaction">
    <interactant intactId="EBI-473850">
        <id>P61086</id>
    </interactant>
    <interactant intactId="EBI-714860">
        <id>P09936</id>
        <label>UCHL1</label>
    </interactant>
    <organismsDiffer>false</organismsDiffer>
    <experiments>3</experiments>
</comment>
<comment type="interaction">
    <interactant intactId="EBI-473850">
        <id>P61086</id>
    </interactant>
    <interactant intactId="EBI-12157263">
        <id>P40337-2</id>
        <label>VHL</label>
    </interactant>
    <organismsDiffer>false</organismsDiffer>
    <experiments>3</experiments>
</comment>
<comment type="interaction">
    <interactant intactId="EBI-473850">
        <id>P61086</id>
    </interactant>
    <interactant intactId="EBI-373380">
        <id>Q9H270</id>
        <label>VPS11</label>
    </interactant>
    <organismsDiffer>false</organismsDiffer>
    <experiments>3</experiments>
</comment>
<comment type="interaction">
    <interactant intactId="EBI-473850">
        <id>P61086</id>
    </interactant>
    <interactant intactId="EBI-720609">
        <id>O76024</id>
        <label>WFS1</label>
    </interactant>
    <organismsDiffer>false</organismsDiffer>
    <experiments>3</experiments>
</comment>
<comment type="interaction">
    <interactant intactId="EBI-473850">
        <id>P61086</id>
    </interactant>
    <interactant intactId="EBI-10984242">
        <id>P0DTL6</id>
        <label>ZFTRAF1</label>
    </interactant>
    <organismsDiffer>false</organismsDiffer>
    <experiments>3</experiments>
</comment>
<comment type="interaction">
    <interactant intactId="EBI-473850">
        <id>P61086</id>
    </interactant>
    <interactant intactId="EBI-9316527">
        <id>Q99PZ6</id>
        <label>ospG</label>
    </interactant>
    <organismsDiffer>true</organismsDiffer>
    <experiments>2</experiments>
</comment>
<comment type="subcellular location">
    <subcellularLocation>
        <location evidence="1">Cytoplasm</location>
    </subcellularLocation>
</comment>
<comment type="alternative products">
    <event type="alternative splicing"/>
    <isoform>
        <id>P61086-1</id>
        <name>1</name>
        <sequence type="displayed"/>
    </isoform>
    <isoform>
        <id>P61086-2</id>
        <name>2</name>
        <sequence type="described" ref="VSP_011798"/>
    </isoform>
    <isoform>
        <id>P61086-3</id>
        <name>3</name>
        <sequence type="described" ref="VSP_046211"/>
    </isoform>
</comment>
<comment type="tissue specificity">
    <text evidence="5 6 14">Expressed in all tissues tested, including spleen, thymus, prostate, testis, ovary, small intestine, colon, peripheral blood leukocytes, T-lymphocytes, monocytes, granulocytes and bone marrow mononuclear cells. Highly expressed in brain, with highest levels found in cortex and striatum and at lower levels in cerebellum and brainstem.</text>
</comment>
<comment type="induction">
    <text evidence="5 6">By aggregated low-density lipoprotein.</text>
</comment>
<comment type="PTM">
    <text evidence="1">Sumoylation at Lys-14 impairs catalytic activity.</text>
</comment>
<comment type="miscellaneous">
    <molecule>Isoform 2</molecule>
    <text evidence="21">May be inactive.</text>
</comment>
<comment type="similarity">
    <text evidence="3">Belongs to the ubiquitin-conjugating enzyme family.</text>
</comment>
<sequence>MANIAVQRIKREFKEVLKSEETSKNQIKVDLVDENFTELRGEIAGPPDTPYEGGRYQLEIKIPETYPFNPPKVRFITKIWHPNISSVTGAICLDILKDQWAAAMTLRTVLLSLQALLAAAEPDDPQDAVVANQYKQNPEMFKQTARLWAHVYAGAPVSSPEYTKKIENLCAMGFDRNAVIVALSSKSWDVETATELLLSN</sequence>
<gene>
    <name type="primary">UBE2K</name>
    <name type="synonym">HIP2</name>
    <name type="synonym">LIG</name>
</gene>
<organism>
    <name type="scientific">Homo sapiens</name>
    <name type="common">Human</name>
    <dbReference type="NCBI Taxonomy" id="9606"/>
    <lineage>
        <taxon>Eukaryota</taxon>
        <taxon>Metazoa</taxon>
        <taxon>Chordata</taxon>
        <taxon>Craniata</taxon>
        <taxon>Vertebrata</taxon>
        <taxon>Euteleostomi</taxon>
        <taxon>Mammalia</taxon>
        <taxon>Eutheria</taxon>
        <taxon>Euarchontoglires</taxon>
        <taxon>Primates</taxon>
        <taxon>Haplorrhini</taxon>
        <taxon>Catarrhini</taxon>
        <taxon>Hominidae</taxon>
        <taxon>Homo</taxon>
    </lineage>
</organism>
<reference key="1">
    <citation type="journal article" date="1996" name="J. Biol. Chem.">
        <title>Huntingtin is ubiquitinated and interacts with a specific ubiquitin-conjugating enzyme.</title>
        <authorList>
            <person name="Kalchman M.A."/>
            <person name="Graham R.K."/>
            <person name="Xia G."/>
            <person name="Koide H.B."/>
            <person name="Hodgson J.G."/>
            <person name="Graham K.C."/>
            <person name="Goldberg Y.P."/>
            <person name="Gietz R.D."/>
            <person name="Pickart C.M."/>
            <person name="Hayden M.R."/>
        </authorList>
    </citation>
    <scope>NUCLEOTIDE SEQUENCE [MRNA] (ISOFORM 1)</scope>
    <scope>FUNCTION</scope>
    <scope>TISSUE SPECIFICITY</scope>
</reference>
<reference key="2">
    <citation type="journal article" date="2000" name="Arterioscler. Thromb. Vasc. Biol.">
        <title>Induction of ubiquitin-conjugating enzyme by aggregated low density lipoprotein in human macrophages and its implications for atherosclerosis.</title>
        <authorList>
            <person name="Kikuchi J."/>
            <person name="Furukawa Y."/>
            <person name="Kubo N."/>
            <person name="Tokura A."/>
            <person name="Hayashi N."/>
            <person name="Nakamura M."/>
            <person name="Matsuda M."/>
            <person name="Sakurabayashi I."/>
        </authorList>
    </citation>
    <scope>NUCLEOTIDE SEQUENCE [MRNA] (ISOFORMS 1 AND 2)</scope>
    <scope>FUNCTION</scope>
    <scope>TISSUE SPECIFICITY</scope>
    <scope>INDUCTION</scope>
</reference>
<reference key="3">
    <citation type="journal article" date="2000" name="Electrophoresis">
        <title>Regulation of macrophage-specific gene expression by degenerated lipoproteins.</title>
        <authorList>
            <person name="Furukawa Y."/>
            <person name="Kubo N."/>
            <person name="Kikuchi J."/>
            <person name="Tokura A."/>
            <person name="Fujita N."/>
            <person name="Sakurabayashi I."/>
        </authorList>
    </citation>
    <scope>NUCLEOTIDE SEQUENCE [MRNA] (ISOFORMS 1 AND 2)</scope>
    <scope>FUNCTION</scope>
    <scope>TISSUE SPECIFICITY</scope>
    <scope>INDUCTION</scope>
</reference>
<reference key="4">
    <citation type="submission" date="2003-04" db="EMBL/GenBank/DDBJ databases">
        <title>Full-length cDNA libraries and normalization.</title>
        <authorList>
            <person name="Li W.B."/>
            <person name="Gruber C."/>
            <person name="Jessee J."/>
            <person name="Polayes D."/>
        </authorList>
    </citation>
    <scope>NUCLEOTIDE SEQUENCE [LARGE SCALE MRNA] (ISOFORM 3)</scope>
    <source>
        <tissue>Placenta</tissue>
    </source>
</reference>
<reference key="5">
    <citation type="journal article" date="2004" name="Nat. Genet.">
        <title>Complete sequencing and characterization of 21,243 full-length human cDNAs.</title>
        <authorList>
            <person name="Ota T."/>
            <person name="Suzuki Y."/>
            <person name="Nishikawa T."/>
            <person name="Otsuki T."/>
            <person name="Sugiyama T."/>
            <person name="Irie R."/>
            <person name="Wakamatsu A."/>
            <person name="Hayashi K."/>
            <person name="Sato H."/>
            <person name="Nagai K."/>
            <person name="Kimura K."/>
            <person name="Makita H."/>
            <person name="Sekine M."/>
            <person name="Obayashi M."/>
            <person name="Nishi T."/>
            <person name="Shibahara T."/>
            <person name="Tanaka T."/>
            <person name="Ishii S."/>
            <person name="Yamamoto J."/>
            <person name="Saito K."/>
            <person name="Kawai Y."/>
            <person name="Isono Y."/>
            <person name="Nakamura Y."/>
            <person name="Nagahari K."/>
            <person name="Murakami K."/>
            <person name="Yasuda T."/>
            <person name="Iwayanagi T."/>
            <person name="Wagatsuma M."/>
            <person name="Shiratori A."/>
            <person name="Sudo H."/>
            <person name="Hosoiri T."/>
            <person name="Kaku Y."/>
            <person name="Kodaira H."/>
            <person name="Kondo H."/>
            <person name="Sugawara M."/>
            <person name="Takahashi M."/>
            <person name="Kanda K."/>
            <person name="Yokoi T."/>
            <person name="Furuya T."/>
            <person name="Kikkawa E."/>
            <person name="Omura Y."/>
            <person name="Abe K."/>
            <person name="Kamihara K."/>
            <person name="Katsuta N."/>
            <person name="Sato K."/>
            <person name="Tanikawa M."/>
            <person name="Yamazaki M."/>
            <person name="Ninomiya K."/>
            <person name="Ishibashi T."/>
            <person name="Yamashita H."/>
            <person name="Murakawa K."/>
            <person name="Fujimori K."/>
            <person name="Tanai H."/>
            <person name="Kimata M."/>
            <person name="Watanabe M."/>
            <person name="Hiraoka S."/>
            <person name="Chiba Y."/>
            <person name="Ishida S."/>
            <person name="Ono Y."/>
            <person name="Takiguchi S."/>
            <person name="Watanabe S."/>
            <person name="Yosida M."/>
            <person name="Hotuta T."/>
            <person name="Kusano J."/>
            <person name="Kanehori K."/>
            <person name="Takahashi-Fujii A."/>
            <person name="Hara H."/>
            <person name="Tanase T.-O."/>
            <person name="Nomura Y."/>
            <person name="Togiya S."/>
            <person name="Komai F."/>
            <person name="Hara R."/>
            <person name="Takeuchi K."/>
            <person name="Arita M."/>
            <person name="Imose N."/>
            <person name="Musashino K."/>
            <person name="Yuuki H."/>
            <person name="Oshima A."/>
            <person name="Sasaki N."/>
            <person name="Aotsuka S."/>
            <person name="Yoshikawa Y."/>
            <person name="Matsunawa H."/>
            <person name="Ichihara T."/>
            <person name="Shiohata N."/>
            <person name="Sano S."/>
            <person name="Moriya S."/>
            <person name="Momiyama H."/>
            <person name="Satoh N."/>
            <person name="Takami S."/>
            <person name="Terashima Y."/>
            <person name="Suzuki O."/>
            <person name="Nakagawa S."/>
            <person name="Senoh A."/>
            <person name="Mizoguchi H."/>
            <person name="Goto Y."/>
            <person name="Shimizu F."/>
            <person name="Wakebe H."/>
            <person name="Hishigaki H."/>
            <person name="Watanabe T."/>
            <person name="Sugiyama A."/>
            <person name="Takemoto M."/>
            <person name="Kawakami B."/>
            <person name="Yamazaki M."/>
            <person name="Watanabe K."/>
            <person name="Kumagai A."/>
            <person name="Itakura S."/>
            <person name="Fukuzumi Y."/>
            <person name="Fujimori Y."/>
            <person name="Komiyama M."/>
            <person name="Tashiro H."/>
            <person name="Tanigami A."/>
            <person name="Fujiwara T."/>
            <person name="Ono T."/>
            <person name="Yamada K."/>
            <person name="Fujii Y."/>
            <person name="Ozaki K."/>
            <person name="Hirao M."/>
            <person name="Ohmori Y."/>
            <person name="Kawabata A."/>
            <person name="Hikiji T."/>
            <person name="Kobatake N."/>
            <person name="Inagaki H."/>
            <person name="Ikema Y."/>
            <person name="Okamoto S."/>
            <person name="Okitani R."/>
            <person name="Kawakami T."/>
            <person name="Noguchi S."/>
            <person name="Itoh T."/>
            <person name="Shigeta K."/>
            <person name="Senba T."/>
            <person name="Matsumura K."/>
            <person name="Nakajima Y."/>
            <person name="Mizuno T."/>
            <person name="Morinaga M."/>
            <person name="Sasaki M."/>
            <person name="Togashi T."/>
            <person name="Oyama M."/>
            <person name="Hata H."/>
            <person name="Watanabe M."/>
            <person name="Komatsu T."/>
            <person name="Mizushima-Sugano J."/>
            <person name="Satoh T."/>
            <person name="Shirai Y."/>
            <person name="Takahashi Y."/>
            <person name="Nakagawa K."/>
            <person name="Okumura K."/>
            <person name="Nagase T."/>
            <person name="Nomura N."/>
            <person name="Kikuchi H."/>
            <person name="Masuho Y."/>
            <person name="Yamashita R."/>
            <person name="Nakai K."/>
            <person name="Yada T."/>
            <person name="Nakamura Y."/>
            <person name="Ohara O."/>
            <person name="Isogai T."/>
            <person name="Sugano S."/>
        </authorList>
    </citation>
    <scope>NUCLEOTIDE SEQUENCE [LARGE SCALE MRNA] (ISOFORMS 1 AND 2)</scope>
    <source>
        <tissue>Brain</tissue>
    </source>
</reference>
<reference key="6">
    <citation type="journal article" date="2005" name="Nature">
        <title>Generation and annotation of the DNA sequences of human chromosomes 2 and 4.</title>
        <authorList>
            <person name="Hillier L.W."/>
            <person name="Graves T.A."/>
            <person name="Fulton R.S."/>
            <person name="Fulton L.A."/>
            <person name="Pepin K.H."/>
            <person name="Minx P."/>
            <person name="Wagner-McPherson C."/>
            <person name="Layman D."/>
            <person name="Wylie K."/>
            <person name="Sekhon M."/>
            <person name="Becker M.C."/>
            <person name="Fewell G.A."/>
            <person name="Delehaunty K.D."/>
            <person name="Miner T.L."/>
            <person name="Nash W.E."/>
            <person name="Kremitzki C."/>
            <person name="Oddy L."/>
            <person name="Du H."/>
            <person name="Sun H."/>
            <person name="Bradshaw-Cordum H."/>
            <person name="Ali J."/>
            <person name="Carter J."/>
            <person name="Cordes M."/>
            <person name="Harris A."/>
            <person name="Isak A."/>
            <person name="van Brunt A."/>
            <person name="Nguyen C."/>
            <person name="Du F."/>
            <person name="Courtney L."/>
            <person name="Kalicki J."/>
            <person name="Ozersky P."/>
            <person name="Abbott S."/>
            <person name="Armstrong J."/>
            <person name="Belter E.A."/>
            <person name="Caruso L."/>
            <person name="Cedroni M."/>
            <person name="Cotton M."/>
            <person name="Davidson T."/>
            <person name="Desai A."/>
            <person name="Elliott G."/>
            <person name="Erb T."/>
            <person name="Fronick C."/>
            <person name="Gaige T."/>
            <person name="Haakenson W."/>
            <person name="Haglund K."/>
            <person name="Holmes A."/>
            <person name="Harkins R."/>
            <person name="Kim K."/>
            <person name="Kruchowski S.S."/>
            <person name="Strong C.M."/>
            <person name="Grewal N."/>
            <person name="Goyea E."/>
            <person name="Hou S."/>
            <person name="Levy A."/>
            <person name="Martinka S."/>
            <person name="Mead K."/>
            <person name="McLellan M.D."/>
            <person name="Meyer R."/>
            <person name="Randall-Maher J."/>
            <person name="Tomlinson C."/>
            <person name="Dauphin-Kohlberg S."/>
            <person name="Kozlowicz-Reilly A."/>
            <person name="Shah N."/>
            <person name="Swearengen-Shahid S."/>
            <person name="Snider J."/>
            <person name="Strong J.T."/>
            <person name="Thompson J."/>
            <person name="Yoakum M."/>
            <person name="Leonard S."/>
            <person name="Pearman C."/>
            <person name="Trani L."/>
            <person name="Radionenko M."/>
            <person name="Waligorski J.E."/>
            <person name="Wang C."/>
            <person name="Rock S.M."/>
            <person name="Tin-Wollam A.-M."/>
            <person name="Maupin R."/>
            <person name="Latreille P."/>
            <person name="Wendl M.C."/>
            <person name="Yang S.-P."/>
            <person name="Pohl C."/>
            <person name="Wallis J.W."/>
            <person name="Spieth J."/>
            <person name="Bieri T.A."/>
            <person name="Berkowicz N."/>
            <person name="Nelson J.O."/>
            <person name="Osborne J."/>
            <person name="Ding L."/>
            <person name="Meyer R."/>
            <person name="Sabo A."/>
            <person name="Shotland Y."/>
            <person name="Sinha P."/>
            <person name="Wohldmann P.E."/>
            <person name="Cook L.L."/>
            <person name="Hickenbotham M.T."/>
            <person name="Eldred J."/>
            <person name="Williams D."/>
            <person name="Jones T.A."/>
            <person name="She X."/>
            <person name="Ciccarelli F.D."/>
            <person name="Izaurralde E."/>
            <person name="Taylor J."/>
            <person name="Schmutz J."/>
            <person name="Myers R.M."/>
            <person name="Cox D.R."/>
            <person name="Huang X."/>
            <person name="McPherson J.D."/>
            <person name="Mardis E.R."/>
            <person name="Clifton S.W."/>
            <person name="Warren W.C."/>
            <person name="Chinwalla A.T."/>
            <person name="Eddy S.R."/>
            <person name="Marra M.A."/>
            <person name="Ovcharenko I."/>
            <person name="Furey T.S."/>
            <person name="Miller W."/>
            <person name="Eichler E.E."/>
            <person name="Bork P."/>
            <person name="Suyama M."/>
            <person name="Torrents D."/>
            <person name="Waterston R.H."/>
            <person name="Wilson R.K."/>
        </authorList>
    </citation>
    <scope>NUCLEOTIDE SEQUENCE [LARGE SCALE GENOMIC DNA]</scope>
</reference>
<reference key="7">
    <citation type="submission" date="2005-07" db="EMBL/GenBank/DDBJ databases">
        <authorList>
            <person name="Mural R.J."/>
            <person name="Istrail S."/>
            <person name="Sutton G.G."/>
            <person name="Florea L."/>
            <person name="Halpern A.L."/>
            <person name="Mobarry C.M."/>
            <person name="Lippert R."/>
            <person name="Walenz B."/>
            <person name="Shatkay H."/>
            <person name="Dew I."/>
            <person name="Miller J.R."/>
            <person name="Flanigan M.J."/>
            <person name="Edwards N.J."/>
            <person name="Bolanos R."/>
            <person name="Fasulo D."/>
            <person name="Halldorsson B.V."/>
            <person name="Hannenhalli S."/>
            <person name="Turner R."/>
            <person name="Yooseph S."/>
            <person name="Lu F."/>
            <person name="Nusskern D.R."/>
            <person name="Shue B.C."/>
            <person name="Zheng X.H."/>
            <person name="Zhong F."/>
            <person name="Delcher A.L."/>
            <person name="Huson D.H."/>
            <person name="Kravitz S.A."/>
            <person name="Mouchard L."/>
            <person name="Reinert K."/>
            <person name="Remington K.A."/>
            <person name="Clark A.G."/>
            <person name="Waterman M.S."/>
            <person name="Eichler E.E."/>
            <person name="Adams M.D."/>
            <person name="Hunkapiller M.W."/>
            <person name="Myers E.W."/>
            <person name="Venter J.C."/>
        </authorList>
    </citation>
    <scope>NUCLEOTIDE SEQUENCE [LARGE SCALE GENOMIC DNA]</scope>
</reference>
<reference key="8">
    <citation type="journal article" date="2004" name="Genome Res.">
        <title>The status, quality, and expansion of the NIH full-length cDNA project: the Mammalian Gene Collection (MGC).</title>
        <authorList>
            <consortium name="The MGC Project Team"/>
        </authorList>
    </citation>
    <scope>NUCLEOTIDE SEQUENCE [LARGE SCALE MRNA] (ISOFORM 1)</scope>
    <source>
        <tissue>Brain</tissue>
        <tissue>Uterus</tissue>
    </source>
</reference>
<reference key="9">
    <citation type="journal article" date="2006" name="J. Biol. Chem.">
        <title>NARF, an nemo-like kinase (NLK)-associated ring finger protein regulates the ubiquitylation and degradation of T cell factor/lymphoid enhancer factor (TCF/LEF).</title>
        <authorList>
            <person name="Yamada M."/>
            <person name="Ohnishi J."/>
            <person name="Ohkawara B."/>
            <person name="Iemura S."/>
            <person name="Satoh K."/>
            <person name="Hyodo-Miura J."/>
            <person name="Kawachi K."/>
            <person name="Natsume T."/>
            <person name="Shibuya H."/>
        </authorList>
    </citation>
    <scope>PROTEIN SEQUENCE OF 2-10; 62-72; 79-97 AND 166-186</scope>
    <scope>FUNCTION</scope>
    <scope>IDENTIFICATION BY MASS SPECTROMETRY</scope>
    <scope>INTERACTION WITH RNF138</scope>
</reference>
<reference key="10">
    <citation type="journal article" date="2003" name="Nat. Biotechnol.">
        <title>Exploring proteomes and analyzing protein processing by mass spectrometric identification of sorted N-terminal peptides.</title>
        <authorList>
            <person name="Gevaert K."/>
            <person name="Goethals M."/>
            <person name="Martens L."/>
            <person name="Van Damme J."/>
            <person name="Staes A."/>
            <person name="Thomas G.R."/>
            <person name="Vandekerckhove J."/>
        </authorList>
    </citation>
    <scope>PROTEIN SEQUENCE OF 2-8</scope>
    <source>
        <tissue>Platelet</tissue>
    </source>
</reference>
<reference key="11">
    <citation type="submission" date="2010-01" db="UniProtKB">
        <authorList>
            <person name="Bienvenut W.V."/>
            <person name="Bilsland A.E."/>
            <person name="Keith W.N."/>
        </authorList>
    </citation>
    <scope>PROTEIN SEQUENCE OF 2-8; 56-72 AND 177-186</scope>
    <scope>CLEAVAGE OF INITIATOR METHIONINE</scope>
    <scope>ACETYLATION AT ALA-2</scope>
    <scope>IDENTIFICATION BY MASS SPECTROMETRY</scope>
    <source>
        <tissue>Colon carcinoma</tissue>
    </source>
</reference>
<reference key="12">
    <citation type="journal article" date="2006" name="Proc. Natl. Acad. Sci. U.S.A.">
        <title>E2-25K mediates US11-triggered retro-translocation of MHC class I heavy chains in a permeabilized cell system.</title>
        <authorList>
            <person name="Flierman D."/>
            <person name="Coleman C.S."/>
            <person name="Pickart C.M."/>
            <person name="Rapoport T.A."/>
            <person name="Chau V."/>
        </authorList>
    </citation>
    <scope>FUNCTION IN DEGRADATION OF MHC CLASS I HEAVY CHAINS</scope>
</reference>
<reference key="13">
    <citation type="journal article" date="2007" name="Nat. Struct. Mol. Biol.">
        <title>E2-BRCA1 RING interactions dictate synthesis of mono- or specific polyubiquitin chain linkages.</title>
        <authorList>
            <person name="Christensen D.E."/>
            <person name="Brzovic P.S."/>
            <person name="Klevit R.E."/>
        </authorList>
    </citation>
    <scope>FUNCTION IN POLYUBIQUITINATION</scope>
    <scope>INTERACTION WITH BRCA1</scope>
</reference>
<reference key="14">
    <citation type="journal article" date="2009" name="Science">
        <title>Lysine acetylation targets protein complexes and co-regulates major cellular functions.</title>
        <authorList>
            <person name="Choudhary C."/>
            <person name="Kumar C."/>
            <person name="Gnad F."/>
            <person name="Nielsen M.L."/>
            <person name="Rehman M."/>
            <person name="Walther T.C."/>
            <person name="Olsen J.V."/>
            <person name="Mann M."/>
        </authorList>
    </citation>
    <scope>ACETYLATION [LARGE SCALE ANALYSIS] AT LYS-14</scope>
    <scope>IDENTIFICATION BY MASS SPECTROMETRY [LARGE SCALE ANALYSIS]</scope>
</reference>
<reference key="15">
    <citation type="journal article" date="2010" name="J. Biol. Chem.">
        <title>The E2 ubiquitin-conjugating enzymes direct polyubiquitination to preferred lysines.</title>
        <authorList>
            <person name="David Y."/>
            <person name="Ziv T."/>
            <person name="Admon A."/>
            <person name="Navon A."/>
        </authorList>
    </citation>
    <scope>FUNCTION</scope>
    <scope>CATALYTIC ACTIVITY</scope>
</reference>
<reference key="16">
    <citation type="journal article" date="2010" name="Virology">
        <title>Destabilization of Rb by human papillomavirus E7 is cell cycle dependent: E2-25K is involved in the proteolysis.</title>
        <authorList>
            <person name="Oh K.J."/>
            <person name="Kalinina A."/>
            <person name="Bagchi S."/>
        </authorList>
    </citation>
    <scope>FUNCTION IN VIRUS-INDUCED DEGRADATION OF RB1</scope>
</reference>
<reference key="17">
    <citation type="journal article" date="2011" name="BMC Syst. Biol.">
        <title>Initial characterization of the human central proteome.</title>
        <authorList>
            <person name="Burkard T.R."/>
            <person name="Planyavsky M."/>
            <person name="Kaupe I."/>
            <person name="Breitwieser F.P."/>
            <person name="Buerckstuemmer T."/>
            <person name="Bennett K.L."/>
            <person name="Superti-Furga G."/>
            <person name="Colinge J."/>
        </authorList>
    </citation>
    <scope>IDENTIFICATION BY MASS SPECTROMETRY [LARGE SCALE ANALYSIS]</scope>
</reference>
<reference key="18">
    <citation type="journal article" date="2011" name="Nature">
        <title>UBCH7 reactivity profile reveals parkin and HHARI to be RING/HECT hybrids.</title>
        <authorList>
            <person name="Wenzel D.M."/>
            <person name="Lissounov A."/>
            <person name="Brzovic P.S."/>
            <person name="Klevit R.E."/>
        </authorList>
    </citation>
    <scope>MUTAGENESIS OF ASP-94</scope>
</reference>
<reference key="19">
    <citation type="journal article" date="2012" name="Mol. Cell. Proteomics">
        <title>Comparative large-scale characterisation of plant vs. mammal proteins reveals similar and idiosyncratic N-alpha acetylation features.</title>
        <authorList>
            <person name="Bienvenut W.V."/>
            <person name="Sumpton D."/>
            <person name="Martinez A."/>
            <person name="Lilla S."/>
            <person name="Espagne C."/>
            <person name="Meinnel T."/>
            <person name="Giglione C."/>
        </authorList>
    </citation>
    <scope>ACETYLATION [LARGE SCALE ANALYSIS] AT ALA-2</scope>
    <scope>CLEAVAGE OF INITIATOR METHIONINE [LARGE SCALE ANALYSIS]</scope>
    <scope>IDENTIFICATION BY MASS SPECTROMETRY [LARGE SCALE ANALYSIS]</scope>
</reference>
<reference key="20">
    <citation type="journal article" date="2012" name="Proc. Natl. Acad. Sci. U.S.A.">
        <title>N-terminal acetylome analyses and functional insights of the N-terminal acetyltransferase NatB.</title>
        <authorList>
            <person name="Van Damme P."/>
            <person name="Lasa M."/>
            <person name="Polevoda B."/>
            <person name="Gazquez C."/>
            <person name="Elosegui-Artola A."/>
            <person name="Kim D.S."/>
            <person name="De Juan-Pardo E."/>
            <person name="Demeyer K."/>
            <person name="Hole K."/>
            <person name="Larrea E."/>
            <person name="Timmerman E."/>
            <person name="Prieto J."/>
            <person name="Arnesen T."/>
            <person name="Sherman F."/>
            <person name="Gevaert K."/>
            <person name="Aldabe R."/>
        </authorList>
    </citation>
    <scope>ACETYLATION [LARGE SCALE ANALYSIS] AT ALA-2</scope>
    <scope>CLEAVAGE OF INITIATOR METHIONINE [LARGE SCALE ANALYSIS]</scope>
    <scope>IDENTIFICATION BY MASS SPECTROMETRY [LARGE SCALE ANALYSIS]</scope>
</reference>
<reference key="21">
    <citation type="journal article" date="2013" name="J. Proteome Res.">
        <title>Toward a comprehensive characterization of a human cancer cell phosphoproteome.</title>
        <authorList>
            <person name="Zhou H."/>
            <person name="Di Palma S."/>
            <person name="Preisinger C."/>
            <person name="Peng M."/>
            <person name="Polat A.N."/>
            <person name="Heck A.J."/>
            <person name="Mohammed S."/>
        </authorList>
    </citation>
    <scope>PHOSPHORYLATION [LARGE SCALE ANALYSIS] AT SER-159</scope>
    <scope>IDENTIFICATION BY MASS SPECTROMETRY [LARGE SCALE ANALYSIS]</scope>
    <source>
        <tissue>Erythroleukemia</tissue>
    </source>
</reference>
<reference key="22">
    <citation type="journal article" date="2014" name="Proc. Natl. Acad. Sci. U.S.A.">
        <title>Mapping of SUMO sites and analysis of SUMOylation changes induced by external stimuli.</title>
        <authorList>
            <person name="Impens F."/>
            <person name="Radoshevich L."/>
            <person name="Cossart P."/>
            <person name="Ribet D."/>
        </authorList>
    </citation>
    <scope>SUMOYLATION [LARGE SCALE ANALYSIS] AT LYS-14</scope>
    <scope>IDENTIFICATION BY MASS SPECTROMETRY [LARGE SCALE ANALYSIS]</scope>
</reference>
<reference key="23">
    <citation type="journal article" date="2015" name="Proteomics">
        <title>N-terminome analysis of the human mitochondrial proteome.</title>
        <authorList>
            <person name="Vaca Jacome A.S."/>
            <person name="Rabilloud T."/>
            <person name="Schaeffer-Reiss C."/>
            <person name="Rompais M."/>
            <person name="Ayoub D."/>
            <person name="Lane L."/>
            <person name="Bairoch A."/>
            <person name="Van Dorsselaer A."/>
            <person name="Carapito C."/>
        </authorList>
    </citation>
    <scope>IDENTIFICATION BY MASS SPECTROMETRY [LARGE SCALE ANALYSIS]</scope>
</reference>
<reference key="24">
    <citation type="journal article" date="2009" name="Acta Crystallogr. F">
        <title>Structure of full-length ubiquitin-conjugating enzyme E2-25K (Huntingtin-interacting protein 2).</title>
        <authorList>
            <person name="Wilson R.C."/>
            <person name="Hughes R.C."/>
            <person name="Flatt J.W."/>
            <person name="Meehan E.J."/>
            <person name="Ng J.D."/>
            <person name="Twigg P.D."/>
        </authorList>
    </citation>
    <scope>X-RAY CRYSTALLOGRAPHY (1.86 ANGSTROMS)</scope>
</reference>
<reference key="25">
    <citation type="submission" date="2009-02" db="PDB data bank">
        <title>A novel and unexpected complex between the SUMO-1-conjugating enzyme UBC9 and the ubiquitin-conjugating enzyme E2-25 kDA.</title>
        <authorList>
            <consortium name="Structural genomics consortium (SGC)"/>
        </authorList>
    </citation>
    <scope>X-RAY CRYSTALLOGRAPHY (2.6 ANGSTROMS) IN COMPLEX WITH UBE2I</scope>
</reference>
<reference key="26">
    <citation type="submission" date="2009-02" db="PDB data bank">
        <title>Ubiquitin-conjugating enzyme E2-25 kDA (Huntington-interacting protein 2).</title>
        <authorList>
            <consortium name="Structural genomics consortium (SGC)"/>
        </authorList>
    </citation>
    <scope>X-RAY CRYSTALLOGRAPHY (2.4 ANGSTROMS)</scope>
</reference>
<name>UBE2K_HUMAN</name>
<keyword id="KW-0002">3D-structure</keyword>
<keyword id="KW-0007">Acetylation</keyword>
<keyword id="KW-0025">Alternative splicing</keyword>
<keyword id="KW-0067">ATP-binding</keyword>
<keyword id="KW-0963">Cytoplasm</keyword>
<keyword id="KW-0903">Direct protein sequencing</keyword>
<keyword id="KW-1017">Isopeptide bond</keyword>
<keyword id="KW-0547">Nucleotide-binding</keyword>
<keyword id="KW-0597">Phosphoprotein</keyword>
<keyword id="KW-1267">Proteomics identification</keyword>
<keyword id="KW-1185">Reference proteome</keyword>
<keyword id="KW-0808">Transferase</keyword>
<keyword id="KW-0832">Ubl conjugation</keyword>
<keyword id="KW-0833">Ubl conjugation pathway</keyword>
<feature type="initiator methionine" description="Removed" evidence="7 8 15 23 24">
    <location>
        <position position="1"/>
    </location>
</feature>
<feature type="chain" id="PRO_0000082443" description="Ubiquitin-conjugating enzyme E2 K">
    <location>
        <begin position="2"/>
        <end position="200"/>
    </location>
</feature>
<feature type="domain" description="UBC core" evidence="3">
    <location>
        <begin position="4"/>
        <end position="154"/>
    </location>
</feature>
<feature type="domain" description="UBA" evidence="2">
    <location>
        <begin position="160"/>
        <end position="200"/>
    </location>
</feature>
<feature type="active site" description="Glycyl thioester intermediate" evidence="3 4">
    <location>
        <position position="92"/>
    </location>
</feature>
<feature type="modified residue" description="N-acetylalanine" evidence="15 23 24">
    <location>
        <position position="2"/>
    </location>
</feature>
<feature type="modified residue" description="N6-acetyllysine; alternate" evidence="22">
    <location>
        <position position="14"/>
    </location>
</feature>
<feature type="modified residue" description="Phosphoserine" evidence="25">
    <location>
        <position position="159"/>
    </location>
</feature>
<feature type="cross-link" description="Glycyl lysine isopeptide (Lys-Gly) (interchain with G-Cter in SUMO1); alternate" evidence="26">
    <location>
        <position position="14"/>
    </location>
</feature>
<feature type="splice variant" id="VSP_011798" description="In isoform 2." evidence="17 18 19">
    <location>
        <begin position="22"/>
        <end position="72"/>
    </location>
</feature>
<feature type="splice variant" id="VSP_046211" description="In isoform 3." evidence="20">
    <location>
        <begin position="134"/>
        <end position="176"/>
    </location>
</feature>
<feature type="mutagenesis site" description="Decreased lysine reactivity and impaired formation of free polyubiquitin chains." evidence="13">
    <original>D</original>
    <variation>E</variation>
    <location>
        <position position="94"/>
    </location>
</feature>
<feature type="helix" evidence="29">
    <location>
        <begin position="6"/>
        <end position="17"/>
    </location>
</feature>
<feature type="helix" evidence="29">
    <location>
        <begin position="20"/>
        <end position="23"/>
    </location>
</feature>
<feature type="strand" evidence="29">
    <location>
        <begin position="26"/>
        <end position="31"/>
    </location>
</feature>
<feature type="strand" evidence="28">
    <location>
        <begin position="33"/>
        <end position="35"/>
    </location>
</feature>
<feature type="strand" evidence="29">
    <location>
        <begin position="36"/>
        <end position="44"/>
    </location>
</feature>
<feature type="strand" evidence="27">
    <location>
        <begin position="47"/>
        <end position="49"/>
    </location>
</feature>
<feature type="turn" evidence="29">
    <location>
        <begin position="50"/>
        <end position="53"/>
    </location>
</feature>
<feature type="strand" evidence="29">
    <location>
        <begin position="55"/>
        <end position="61"/>
    </location>
</feature>
<feature type="turn" evidence="29">
    <location>
        <begin position="64"/>
        <end position="68"/>
    </location>
</feature>
<feature type="strand" evidence="29">
    <location>
        <begin position="72"/>
        <end position="77"/>
    </location>
</feature>
<feature type="turn" evidence="29">
    <location>
        <begin position="86"/>
        <end position="88"/>
    </location>
</feature>
<feature type="helix" evidence="29">
    <location>
        <begin position="94"/>
        <end position="96"/>
    </location>
</feature>
<feature type="turn" evidence="29">
    <location>
        <begin position="97"/>
        <end position="99"/>
    </location>
</feature>
<feature type="helix" evidence="29">
    <location>
        <begin position="106"/>
        <end position="118"/>
    </location>
</feature>
<feature type="helix" evidence="29">
    <location>
        <begin position="128"/>
        <end position="136"/>
    </location>
</feature>
<feature type="helix" evidence="29">
    <location>
        <begin position="138"/>
        <end position="153"/>
    </location>
</feature>
<feature type="helix" evidence="29">
    <location>
        <begin position="160"/>
        <end position="170"/>
    </location>
</feature>
<feature type="turn" evidence="29">
    <location>
        <begin position="171"/>
        <end position="173"/>
    </location>
</feature>
<feature type="helix" evidence="29">
    <location>
        <begin position="176"/>
        <end position="185"/>
    </location>
</feature>
<feature type="turn" evidence="29">
    <location>
        <begin position="186"/>
        <end position="188"/>
    </location>
</feature>
<feature type="helix" evidence="29">
    <location>
        <begin position="190"/>
        <end position="199"/>
    </location>
</feature>
<proteinExistence type="evidence at protein level"/>
<evidence type="ECO:0000250" key="1">
    <source>
        <dbReference type="UniProtKB" id="P61085"/>
    </source>
</evidence>
<evidence type="ECO:0000255" key="2">
    <source>
        <dbReference type="PROSITE-ProRule" id="PRU00212"/>
    </source>
</evidence>
<evidence type="ECO:0000255" key="3">
    <source>
        <dbReference type="PROSITE-ProRule" id="PRU00388"/>
    </source>
</evidence>
<evidence type="ECO:0000255" key="4">
    <source>
        <dbReference type="PROSITE-ProRule" id="PRU10133"/>
    </source>
</evidence>
<evidence type="ECO:0000269" key="5">
    <source>
    </source>
</evidence>
<evidence type="ECO:0000269" key="6">
    <source>
    </source>
</evidence>
<evidence type="ECO:0000269" key="7">
    <source>
    </source>
</evidence>
<evidence type="ECO:0000269" key="8">
    <source>
    </source>
</evidence>
<evidence type="ECO:0000269" key="9">
    <source>
    </source>
</evidence>
<evidence type="ECO:0000269" key="10">
    <source>
    </source>
</evidence>
<evidence type="ECO:0000269" key="11">
    <source>
    </source>
</evidence>
<evidence type="ECO:0000269" key="12">
    <source>
    </source>
</evidence>
<evidence type="ECO:0000269" key="13">
    <source>
    </source>
</evidence>
<evidence type="ECO:0000269" key="14">
    <source>
    </source>
</evidence>
<evidence type="ECO:0000269" key="15">
    <source ref="11"/>
</evidence>
<evidence type="ECO:0000269" key="16">
    <source ref="25"/>
</evidence>
<evidence type="ECO:0000303" key="17">
    <source>
    </source>
</evidence>
<evidence type="ECO:0000303" key="18">
    <source>
    </source>
</evidence>
<evidence type="ECO:0000303" key="19">
    <source>
    </source>
</evidence>
<evidence type="ECO:0000303" key="20">
    <source ref="4"/>
</evidence>
<evidence type="ECO:0000305" key="21"/>
<evidence type="ECO:0007744" key="22">
    <source>
    </source>
</evidence>
<evidence type="ECO:0007744" key="23">
    <source>
    </source>
</evidence>
<evidence type="ECO:0007744" key="24">
    <source>
    </source>
</evidence>
<evidence type="ECO:0007744" key="25">
    <source>
    </source>
</evidence>
<evidence type="ECO:0007744" key="26">
    <source>
    </source>
</evidence>
<evidence type="ECO:0007829" key="27">
    <source>
        <dbReference type="PDB" id="1YLA"/>
    </source>
</evidence>
<evidence type="ECO:0007829" key="28">
    <source>
        <dbReference type="PDB" id="2O25"/>
    </source>
</evidence>
<evidence type="ECO:0007829" key="29">
    <source>
        <dbReference type="PDB" id="3K9O"/>
    </source>
</evidence>
<dbReference type="EC" id="2.3.2.23" evidence="12"/>
<dbReference type="EMBL" id="U58522">
    <property type="protein sequence ID" value="AAC50633.1"/>
    <property type="molecule type" value="mRNA"/>
</dbReference>
<dbReference type="EMBL" id="AB022435">
    <property type="protein sequence ID" value="BAA78555.1"/>
    <property type="molecule type" value="mRNA"/>
</dbReference>
<dbReference type="EMBL" id="AB022436">
    <property type="protein sequence ID" value="BAA78556.1"/>
    <property type="molecule type" value="mRNA"/>
</dbReference>
<dbReference type="EMBL" id="BX339118">
    <property type="status" value="NOT_ANNOTATED_CDS"/>
    <property type="molecule type" value="mRNA"/>
</dbReference>
<dbReference type="EMBL" id="AK291454">
    <property type="protein sequence ID" value="BAF84143.1"/>
    <property type="molecule type" value="mRNA"/>
</dbReference>
<dbReference type="EMBL" id="AK315524">
    <property type="protein sequence ID" value="BAG37905.1"/>
    <property type="molecule type" value="mRNA"/>
</dbReference>
<dbReference type="EMBL" id="AC105287">
    <property type="status" value="NOT_ANNOTATED_CDS"/>
    <property type="molecule type" value="Genomic_DNA"/>
</dbReference>
<dbReference type="EMBL" id="AC108471">
    <property type="status" value="NOT_ANNOTATED_CDS"/>
    <property type="molecule type" value="Genomic_DNA"/>
</dbReference>
<dbReference type="EMBL" id="CH471069">
    <property type="protein sequence ID" value="EAW92948.1"/>
    <property type="molecule type" value="Genomic_DNA"/>
</dbReference>
<dbReference type="EMBL" id="BC022804">
    <property type="protein sequence ID" value="AAH22804.1"/>
    <property type="molecule type" value="mRNA"/>
</dbReference>
<dbReference type="EMBL" id="BC050600">
    <property type="protein sequence ID" value="AAH50600.1"/>
    <property type="molecule type" value="mRNA"/>
</dbReference>
<dbReference type="CCDS" id="CCDS33976.1">
    <molecule id="P61086-1"/>
</dbReference>
<dbReference type="CCDS" id="CCDS47043.1">
    <molecule id="P61086-3"/>
</dbReference>
<dbReference type="CCDS" id="CCDS47044.1">
    <molecule id="P61086-2"/>
</dbReference>
<dbReference type="RefSeq" id="NP_001104582.1">
    <molecule id="P61086-3"/>
    <property type="nucleotide sequence ID" value="NM_001111112.2"/>
</dbReference>
<dbReference type="RefSeq" id="NP_001104583.1">
    <molecule id="P61086-2"/>
    <property type="nucleotide sequence ID" value="NM_001111113.2"/>
</dbReference>
<dbReference type="RefSeq" id="NP_005330.1">
    <molecule id="P61086-1"/>
    <property type="nucleotide sequence ID" value="NM_005339.5"/>
</dbReference>
<dbReference type="PDB" id="1YLA">
    <property type="method" value="X-ray"/>
    <property type="resolution" value="2.40 A"/>
    <property type="chains" value="A/B=1-200"/>
</dbReference>
<dbReference type="PDB" id="2O25">
    <property type="method" value="X-ray"/>
    <property type="resolution" value="2.60 A"/>
    <property type="chains" value="A/B=1-200"/>
</dbReference>
<dbReference type="PDB" id="3E46">
    <property type="method" value="X-ray"/>
    <property type="resolution" value="1.86 A"/>
    <property type="chains" value="A=1-200"/>
</dbReference>
<dbReference type="PDB" id="3F92">
    <property type="method" value="X-ray"/>
    <property type="resolution" value="2.23 A"/>
    <property type="chains" value="A=1-200"/>
</dbReference>
<dbReference type="PDB" id="3K9O">
    <property type="method" value="X-ray"/>
    <property type="resolution" value="1.80 A"/>
    <property type="chains" value="A=1-200"/>
</dbReference>
<dbReference type="PDB" id="3K9P">
    <property type="method" value="X-ray"/>
    <property type="resolution" value="2.80 A"/>
    <property type="chains" value="A=1-200"/>
</dbReference>
<dbReference type="PDB" id="5DFL">
    <property type="method" value="X-ray"/>
    <property type="resolution" value="2.10 A"/>
    <property type="chains" value="A=1-200"/>
</dbReference>
<dbReference type="PDB" id="6IF1">
    <property type="method" value="X-ray"/>
    <property type="resolution" value="2.47 A"/>
    <property type="chains" value="A/B=1-199"/>
</dbReference>
<dbReference type="PDB" id="6JB6">
    <property type="method" value="X-ray"/>
    <property type="resolution" value="2.70 A"/>
    <property type="chains" value="A=1-200"/>
</dbReference>
<dbReference type="PDB" id="6JB7">
    <property type="method" value="X-ray"/>
    <property type="resolution" value="2.10 A"/>
    <property type="chains" value="A=1-200"/>
</dbReference>
<dbReference type="PDB" id="7MYF">
    <property type="method" value="X-ray"/>
    <property type="resolution" value="3.00 A"/>
    <property type="chains" value="A=2-200"/>
</dbReference>
<dbReference type="PDB" id="7MYH">
    <property type="method" value="X-ray"/>
    <property type="resolution" value="2.39 A"/>
    <property type="chains" value="A=2-200"/>
</dbReference>
<dbReference type="PDB" id="7OJX">
    <property type="method" value="X-ray"/>
    <property type="resolution" value="2.40 A"/>
    <property type="chains" value="B=1-200"/>
</dbReference>
<dbReference type="PDBsum" id="1YLA"/>
<dbReference type="PDBsum" id="2O25"/>
<dbReference type="PDBsum" id="3E46"/>
<dbReference type="PDBsum" id="3F92"/>
<dbReference type="PDBsum" id="3K9O"/>
<dbReference type="PDBsum" id="3K9P"/>
<dbReference type="PDBsum" id="5DFL"/>
<dbReference type="PDBsum" id="6IF1"/>
<dbReference type="PDBsum" id="6JB6"/>
<dbReference type="PDBsum" id="6JB7"/>
<dbReference type="PDBsum" id="7MYF"/>
<dbReference type="PDBsum" id="7MYH"/>
<dbReference type="PDBsum" id="7OJX"/>
<dbReference type="BMRB" id="P61086"/>
<dbReference type="SMR" id="P61086"/>
<dbReference type="BioGRID" id="109340">
    <property type="interactions" value="147"/>
</dbReference>
<dbReference type="DIP" id="DIP-32524N"/>
<dbReference type="FunCoup" id="P61086">
    <property type="interactions" value="4951"/>
</dbReference>
<dbReference type="IntAct" id="P61086">
    <property type="interactions" value="96"/>
</dbReference>
<dbReference type="MINT" id="P61086"/>
<dbReference type="STRING" id="9606.ENSP00000261427"/>
<dbReference type="ChEMBL" id="CHEMBL4105835"/>
<dbReference type="MoonDB" id="P61086">
    <property type="type" value="Predicted"/>
</dbReference>
<dbReference type="GlyGen" id="P61086">
    <property type="glycosylation" value="1 site, 1 O-linked glycan (1 site)"/>
</dbReference>
<dbReference type="iPTMnet" id="P61086"/>
<dbReference type="MetOSite" id="P61086"/>
<dbReference type="PhosphoSitePlus" id="P61086"/>
<dbReference type="SwissPalm" id="P61086"/>
<dbReference type="BioMuta" id="UBE2K"/>
<dbReference type="DMDM" id="46577658"/>
<dbReference type="OGP" id="P27924"/>
<dbReference type="jPOST" id="P61086"/>
<dbReference type="MassIVE" id="P61086"/>
<dbReference type="PaxDb" id="9606-ENSP00000261427"/>
<dbReference type="PeptideAtlas" id="P61086"/>
<dbReference type="ProteomicsDB" id="10126"/>
<dbReference type="ProteomicsDB" id="57262">
    <molecule id="P61086-1"/>
</dbReference>
<dbReference type="ProteomicsDB" id="57263">
    <molecule id="P61086-2"/>
</dbReference>
<dbReference type="Pumba" id="P61086"/>
<dbReference type="TopDownProteomics" id="P61086-1">
    <molecule id="P61086-1"/>
</dbReference>
<dbReference type="Antibodypedia" id="11733">
    <property type="antibodies" value="417 antibodies from 40 providers"/>
</dbReference>
<dbReference type="DNASU" id="3093"/>
<dbReference type="Ensembl" id="ENST00000261427.10">
    <molecule id="P61086-1"/>
    <property type="protein sequence ID" value="ENSP00000261427.5"/>
    <property type="gene ID" value="ENSG00000078140.14"/>
</dbReference>
<dbReference type="Ensembl" id="ENST00000445950.2">
    <molecule id="P61086-3"/>
    <property type="protein sequence ID" value="ENSP00000390483.2"/>
    <property type="gene ID" value="ENSG00000078140.14"/>
</dbReference>
<dbReference type="Ensembl" id="ENST00000503368.5">
    <molecule id="P61086-2"/>
    <property type="protein sequence ID" value="ENSP00000421203.1"/>
    <property type="gene ID" value="ENSG00000078140.14"/>
</dbReference>
<dbReference type="GeneID" id="3093"/>
<dbReference type="KEGG" id="hsa:3093"/>
<dbReference type="MANE-Select" id="ENST00000261427.10">
    <property type="protein sequence ID" value="ENSP00000261427.5"/>
    <property type="RefSeq nucleotide sequence ID" value="NM_005339.5"/>
    <property type="RefSeq protein sequence ID" value="NP_005330.1"/>
</dbReference>
<dbReference type="UCSC" id="uc003gus.5">
    <molecule id="P61086-1"/>
    <property type="organism name" value="human"/>
</dbReference>
<dbReference type="AGR" id="HGNC:4914"/>
<dbReference type="CTD" id="3093"/>
<dbReference type="DisGeNET" id="3093"/>
<dbReference type="GeneCards" id="UBE2K"/>
<dbReference type="HGNC" id="HGNC:4914">
    <property type="gene designation" value="UBE2K"/>
</dbReference>
<dbReference type="HPA" id="ENSG00000078140">
    <property type="expression patterns" value="Low tissue specificity"/>
</dbReference>
<dbReference type="MIM" id="602846">
    <property type="type" value="gene"/>
</dbReference>
<dbReference type="neXtProt" id="NX_P61086"/>
<dbReference type="OpenTargets" id="ENSG00000078140"/>
<dbReference type="PharmGKB" id="PA162407874"/>
<dbReference type="VEuPathDB" id="HostDB:ENSG00000078140"/>
<dbReference type="eggNOG" id="KOG0418">
    <property type="taxonomic scope" value="Eukaryota"/>
</dbReference>
<dbReference type="GeneTree" id="ENSGT00670000098059"/>
<dbReference type="HOGENOM" id="CLU_030988_13_1_1"/>
<dbReference type="InParanoid" id="P61086"/>
<dbReference type="OMA" id="HWTFVYA"/>
<dbReference type="OrthoDB" id="9993688at2759"/>
<dbReference type="PAN-GO" id="P61086">
    <property type="GO annotations" value="4 GO annotations based on evolutionary models"/>
</dbReference>
<dbReference type="PhylomeDB" id="P61086"/>
<dbReference type="TreeFam" id="TF101127"/>
<dbReference type="BRENDA" id="2.3.2.23">
    <property type="organism ID" value="2681"/>
</dbReference>
<dbReference type="BRENDA" id="2.3.2.24">
    <property type="organism ID" value="2681"/>
</dbReference>
<dbReference type="PathwayCommons" id="P61086"/>
<dbReference type="Reactome" id="R-HSA-8866652">
    <property type="pathway name" value="Synthesis of active ubiquitin: roles of E1 and E2 enzymes"/>
</dbReference>
<dbReference type="Reactome" id="R-HSA-936440">
    <property type="pathway name" value="Negative regulators of DDX58/IFIH1 signaling"/>
</dbReference>
<dbReference type="Reactome" id="R-HSA-983168">
    <property type="pathway name" value="Antigen processing: Ubiquitination &amp; Proteasome degradation"/>
</dbReference>
<dbReference type="SignaLink" id="P61086"/>
<dbReference type="SIGNOR" id="P61086"/>
<dbReference type="UniPathway" id="UPA00143"/>
<dbReference type="BioGRID-ORCS" id="3093">
    <property type="hits" value="82 hits in 1166 CRISPR screens"/>
</dbReference>
<dbReference type="ChiTaRS" id="UBE2K">
    <property type="organism name" value="human"/>
</dbReference>
<dbReference type="EvolutionaryTrace" id="P61086"/>
<dbReference type="GeneWiki" id="HIP2"/>
<dbReference type="GenomeRNAi" id="3093"/>
<dbReference type="Pharos" id="P61086">
    <property type="development level" value="Tbio"/>
</dbReference>
<dbReference type="PRO" id="PR:P61086"/>
<dbReference type="Proteomes" id="UP000005640">
    <property type="component" value="Chromosome 4"/>
</dbReference>
<dbReference type="RNAct" id="P61086">
    <property type="molecule type" value="protein"/>
</dbReference>
<dbReference type="Bgee" id="ENSG00000078140">
    <property type="expression patterns" value="Expressed in sperm and 202 other cell types or tissues"/>
</dbReference>
<dbReference type="ExpressionAtlas" id="P61086">
    <property type="expression patterns" value="baseline and differential"/>
</dbReference>
<dbReference type="GO" id="GO:0005737">
    <property type="term" value="C:cytoplasm"/>
    <property type="evidence" value="ECO:0000305"/>
    <property type="project" value="UniProt"/>
</dbReference>
<dbReference type="GO" id="GO:0005829">
    <property type="term" value="C:cytosol"/>
    <property type="evidence" value="ECO:0000304"/>
    <property type="project" value="Reactome"/>
</dbReference>
<dbReference type="GO" id="GO:0032433">
    <property type="term" value="C:filopodium tip"/>
    <property type="evidence" value="ECO:0007669"/>
    <property type="project" value="Ensembl"/>
</dbReference>
<dbReference type="GO" id="GO:0005634">
    <property type="term" value="C:nucleus"/>
    <property type="evidence" value="ECO:0000318"/>
    <property type="project" value="GO_Central"/>
</dbReference>
<dbReference type="GO" id="GO:0005524">
    <property type="term" value="F:ATP binding"/>
    <property type="evidence" value="ECO:0007669"/>
    <property type="project" value="UniProtKB-KW"/>
</dbReference>
<dbReference type="GO" id="GO:0061631">
    <property type="term" value="F:ubiquitin conjugating enzyme activity"/>
    <property type="evidence" value="ECO:0000318"/>
    <property type="project" value="GO_Central"/>
</dbReference>
<dbReference type="GO" id="GO:0031625">
    <property type="term" value="F:ubiquitin protein ligase binding"/>
    <property type="evidence" value="ECO:0000353"/>
    <property type="project" value="UniProtKB"/>
</dbReference>
<dbReference type="GO" id="GO:0004842">
    <property type="term" value="F:ubiquitin-protein transferase activity"/>
    <property type="evidence" value="ECO:0000314"/>
    <property type="project" value="UniProtKB"/>
</dbReference>
<dbReference type="GO" id="GO:0034450">
    <property type="term" value="F:ubiquitin-ubiquitin ligase activity"/>
    <property type="evidence" value="ECO:0000314"/>
    <property type="project" value="UniProtKB"/>
</dbReference>
<dbReference type="GO" id="GO:0035458">
    <property type="term" value="P:cellular response to interferon-beta"/>
    <property type="evidence" value="ECO:0000315"/>
    <property type="project" value="UniProtKB"/>
</dbReference>
<dbReference type="GO" id="GO:0010994">
    <property type="term" value="P:free ubiquitin chain polymerization"/>
    <property type="evidence" value="ECO:0000314"/>
    <property type="project" value="UniProtKB"/>
</dbReference>
<dbReference type="GO" id="GO:0010800">
    <property type="term" value="P:positive regulation of peptidyl-threonine phosphorylation"/>
    <property type="evidence" value="ECO:0000314"/>
    <property type="project" value="UniProtKB"/>
</dbReference>
<dbReference type="GO" id="GO:1903265">
    <property type="term" value="P:positive regulation of tumor necrosis factor-mediated signaling pathway"/>
    <property type="evidence" value="ECO:0000315"/>
    <property type="project" value="FlyBase"/>
</dbReference>
<dbReference type="GO" id="GO:0060340">
    <property type="term" value="P:positive regulation of type I interferon-mediated signaling pathway"/>
    <property type="evidence" value="ECO:0000315"/>
    <property type="project" value="UniProtKB"/>
</dbReference>
<dbReference type="GO" id="GO:0070936">
    <property type="term" value="P:protein K48-linked ubiquitination"/>
    <property type="evidence" value="ECO:0000314"/>
    <property type="project" value="UniProtKB"/>
</dbReference>
<dbReference type="GO" id="GO:0000209">
    <property type="term" value="P:protein polyubiquitination"/>
    <property type="evidence" value="ECO:0000318"/>
    <property type="project" value="GO_Central"/>
</dbReference>
<dbReference type="GO" id="GO:0032434">
    <property type="term" value="P:regulation of proteasomal ubiquitin-dependent protein catabolic process"/>
    <property type="evidence" value="ECO:0007669"/>
    <property type="project" value="Ensembl"/>
</dbReference>
<dbReference type="GO" id="GO:0006511">
    <property type="term" value="P:ubiquitin-dependent protein catabolic process"/>
    <property type="evidence" value="ECO:0000304"/>
    <property type="project" value="ProtInc"/>
</dbReference>
<dbReference type="CDD" id="cd14390">
    <property type="entry name" value="UBA_II_E2_UBE2K"/>
    <property type="match status" value="1"/>
</dbReference>
<dbReference type="CDD" id="cd23800">
    <property type="entry name" value="UBCc_UBE2K"/>
    <property type="match status" value="1"/>
</dbReference>
<dbReference type="FunFam" id="1.10.8.10:FF:000010">
    <property type="entry name" value="Putative ubiquitin-conjugating enzyme e2 k"/>
    <property type="match status" value="1"/>
</dbReference>
<dbReference type="FunFam" id="3.10.110.10:FF:000021">
    <property type="entry name" value="Putative ubiquitin-conjugating enzyme e2 k"/>
    <property type="match status" value="1"/>
</dbReference>
<dbReference type="Gene3D" id="1.10.8.10">
    <property type="entry name" value="DNA helicase RuvA subunit, C-terminal domain"/>
    <property type="match status" value="1"/>
</dbReference>
<dbReference type="Gene3D" id="3.10.110.10">
    <property type="entry name" value="Ubiquitin Conjugating Enzyme"/>
    <property type="match status" value="1"/>
</dbReference>
<dbReference type="InterPro" id="IPR015940">
    <property type="entry name" value="UBA"/>
</dbReference>
<dbReference type="InterPro" id="IPR009060">
    <property type="entry name" value="UBA-like_sf"/>
</dbReference>
<dbReference type="InterPro" id="IPR042599">
    <property type="entry name" value="UBE2K_UBA"/>
</dbReference>
<dbReference type="InterPro" id="IPR000608">
    <property type="entry name" value="UBQ-conjugat_E2_core"/>
</dbReference>
<dbReference type="InterPro" id="IPR023313">
    <property type="entry name" value="UBQ-conjugating_AS"/>
</dbReference>
<dbReference type="InterPro" id="IPR016135">
    <property type="entry name" value="UBQ-conjugating_enzyme/RWD"/>
</dbReference>
<dbReference type="PANTHER" id="PTHR24068">
    <property type="entry name" value="UBIQUITIN-CONJUGATING ENZYME E2"/>
    <property type="match status" value="1"/>
</dbReference>
<dbReference type="Pfam" id="PF00627">
    <property type="entry name" value="UBA"/>
    <property type="match status" value="1"/>
</dbReference>
<dbReference type="Pfam" id="PF00179">
    <property type="entry name" value="UQ_con"/>
    <property type="match status" value="1"/>
</dbReference>
<dbReference type="SMART" id="SM00165">
    <property type="entry name" value="UBA"/>
    <property type="match status" value="1"/>
</dbReference>
<dbReference type="SMART" id="SM00212">
    <property type="entry name" value="UBCc"/>
    <property type="match status" value="1"/>
</dbReference>
<dbReference type="SUPFAM" id="SSF46934">
    <property type="entry name" value="UBA-like"/>
    <property type="match status" value="1"/>
</dbReference>
<dbReference type="SUPFAM" id="SSF54495">
    <property type="entry name" value="UBC-like"/>
    <property type="match status" value="1"/>
</dbReference>
<dbReference type="PROSITE" id="PS50030">
    <property type="entry name" value="UBA"/>
    <property type="match status" value="1"/>
</dbReference>
<dbReference type="PROSITE" id="PS00183">
    <property type="entry name" value="UBC_1"/>
    <property type="match status" value="1"/>
</dbReference>
<dbReference type="PROSITE" id="PS50127">
    <property type="entry name" value="UBC_2"/>
    <property type="match status" value="1"/>
</dbReference>
<accession>P61086</accession>
<accession>A6NJC1</accession>
<accession>A8K5Y9</accession>
<accession>B2RDF8</accession>
<accession>C9JGP1</accession>
<accession>O54806</accession>
<accession>P27924</accession>
<accession>Q16721</accession>
<accession>Q9CVV9</accession>
<accession>Q9Y2D3</accession>
<protein>
    <recommendedName>
        <fullName>Ubiquitin-conjugating enzyme E2 K</fullName>
        <ecNumber evidence="12">2.3.2.23</ecNumber>
    </recommendedName>
    <alternativeName>
        <fullName>E2 ubiquitin-conjugating enzyme K</fullName>
    </alternativeName>
    <alternativeName>
        <fullName>Huntingtin-interacting protein 2</fullName>
        <shortName>HIP-2</shortName>
    </alternativeName>
    <alternativeName>
        <fullName>Ubiquitin carrier protein</fullName>
    </alternativeName>
    <alternativeName>
        <fullName>Ubiquitin-conjugating enzyme E2-25 kDa</fullName>
        <shortName>Ubiquitin-conjugating enzyme E2(25K)</shortName>
        <shortName>Ubiquitin-conjugating enzyme E2-25K</shortName>
    </alternativeName>
    <alternativeName>
        <fullName>Ubiquitin-protein ligase</fullName>
    </alternativeName>
</protein>